<organism>
    <name type="scientific">Paraburkholderia phymatum (strain DSM 17167 / CIP 108236 / LMG 21445 / STM815)</name>
    <name type="common">Burkholderia phymatum</name>
    <dbReference type="NCBI Taxonomy" id="391038"/>
    <lineage>
        <taxon>Bacteria</taxon>
        <taxon>Pseudomonadati</taxon>
        <taxon>Pseudomonadota</taxon>
        <taxon>Betaproteobacteria</taxon>
        <taxon>Burkholderiales</taxon>
        <taxon>Burkholderiaceae</taxon>
        <taxon>Paraburkholderia</taxon>
    </lineage>
</organism>
<gene>
    <name evidence="1" type="primary">panC</name>
    <name type="ordered locus">Bphy_2197</name>
</gene>
<reference key="1">
    <citation type="journal article" date="2014" name="Stand. Genomic Sci.">
        <title>Complete genome sequence of Burkholderia phymatum STM815(T), a broad host range and efficient nitrogen-fixing symbiont of Mimosa species.</title>
        <authorList>
            <person name="Moulin L."/>
            <person name="Klonowska A."/>
            <person name="Caroline B."/>
            <person name="Booth K."/>
            <person name="Vriezen J.A."/>
            <person name="Melkonian R."/>
            <person name="James E.K."/>
            <person name="Young J.P."/>
            <person name="Bena G."/>
            <person name="Hauser L."/>
            <person name="Land M."/>
            <person name="Kyrpides N."/>
            <person name="Bruce D."/>
            <person name="Chain P."/>
            <person name="Copeland A."/>
            <person name="Pitluck S."/>
            <person name="Woyke T."/>
            <person name="Lizotte-Waniewski M."/>
            <person name="Bristow J."/>
            <person name="Riley M."/>
        </authorList>
    </citation>
    <scope>NUCLEOTIDE SEQUENCE [LARGE SCALE GENOMIC DNA]</scope>
    <source>
        <strain>DSM 17167 / CIP 108236 / LMG 21445 / STM815</strain>
    </source>
</reference>
<sequence length="277" mass="31049">MKVISSIQELRDQLRGQNRTAFVPTMGNLHEGHLSLMRLARQHGDPVVASIFVNRLQFGPNEDFDKYPRTLEADIEKLQKENVYVLFAPTERDMYPQPQEYRVHPPHDLGDILEGEFRPGFFTGVCTVVMKLMSCVQPRVAVFGKKDYQQLMIVRAMTEQFALPTDIVAAETVRDTDGLALSSRNRYLTQTERAEAPMLAATLQGVRQAVLSGNRDFAKLERDAMASLAARGWKPDYIAIRKRSNLIAPAAQDLDAPLVVLAAAKLGATRLIDNLEI</sequence>
<dbReference type="EC" id="6.3.2.1" evidence="1"/>
<dbReference type="EMBL" id="CP001043">
    <property type="protein sequence ID" value="ACC71372.1"/>
    <property type="molecule type" value="Genomic_DNA"/>
</dbReference>
<dbReference type="RefSeq" id="WP_012401578.1">
    <property type="nucleotide sequence ID" value="NC_010622.1"/>
</dbReference>
<dbReference type="SMR" id="B2JEQ7"/>
<dbReference type="STRING" id="391038.Bphy_2197"/>
<dbReference type="KEGG" id="bph:Bphy_2197"/>
<dbReference type="eggNOG" id="COG0414">
    <property type="taxonomic scope" value="Bacteria"/>
</dbReference>
<dbReference type="HOGENOM" id="CLU_047148_0_0_4"/>
<dbReference type="OrthoDB" id="9773087at2"/>
<dbReference type="UniPathway" id="UPA00028">
    <property type="reaction ID" value="UER00005"/>
</dbReference>
<dbReference type="Proteomes" id="UP000001192">
    <property type="component" value="Chromosome 1"/>
</dbReference>
<dbReference type="GO" id="GO:0005829">
    <property type="term" value="C:cytosol"/>
    <property type="evidence" value="ECO:0007669"/>
    <property type="project" value="TreeGrafter"/>
</dbReference>
<dbReference type="GO" id="GO:0005524">
    <property type="term" value="F:ATP binding"/>
    <property type="evidence" value="ECO:0007669"/>
    <property type="project" value="UniProtKB-KW"/>
</dbReference>
<dbReference type="GO" id="GO:0004592">
    <property type="term" value="F:pantoate-beta-alanine ligase activity"/>
    <property type="evidence" value="ECO:0007669"/>
    <property type="project" value="UniProtKB-UniRule"/>
</dbReference>
<dbReference type="GO" id="GO:0015940">
    <property type="term" value="P:pantothenate biosynthetic process"/>
    <property type="evidence" value="ECO:0007669"/>
    <property type="project" value="UniProtKB-UniRule"/>
</dbReference>
<dbReference type="CDD" id="cd00560">
    <property type="entry name" value="PanC"/>
    <property type="match status" value="1"/>
</dbReference>
<dbReference type="Gene3D" id="3.40.50.620">
    <property type="entry name" value="HUPs"/>
    <property type="match status" value="1"/>
</dbReference>
<dbReference type="Gene3D" id="3.30.1300.10">
    <property type="entry name" value="Pantoate-beta-alanine ligase, C-terminal domain"/>
    <property type="match status" value="1"/>
</dbReference>
<dbReference type="HAMAP" id="MF_00158">
    <property type="entry name" value="PanC"/>
    <property type="match status" value="1"/>
</dbReference>
<dbReference type="InterPro" id="IPR004821">
    <property type="entry name" value="Cyt_trans-like"/>
</dbReference>
<dbReference type="InterPro" id="IPR003721">
    <property type="entry name" value="Pantoate_ligase"/>
</dbReference>
<dbReference type="InterPro" id="IPR042176">
    <property type="entry name" value="Pantoate_ligase_C"/>
</dbReference>
<dbReference type="InterPro" id="IPR014729">
    <property type="entry name" value="Rossmann-like_a/b/a_fold"/>
</dbReference>
<dbReference type="NCBIfam" id="TIGR00125">
    <property type="entry name" value="cyt_tran_rel"/>
    <property type="match status" value="1"/>
</dbReference>
<dbReference type="NCBIfam" id="TIGR00018">
    <property type="entry name" value="panC"/>
    <property type="match status" value="1"/>
</dbReference>
<dbReference type="PANTHER" id="PTHR21299">
    <property type="entry name" value="CYTIDYLATE KINASE/PANTOATE-BETA-ALANINE LIGASE"/>
    <property type="match status" value="1"/>
</dbReference>
<dbReference type="PANTHER" id="PTHR21299:SF1">
    <property type="entry name" value="PANTOATE--BETA-ALANINE LIGASE"/>
    <property type="match status" value="1"/>
</dbReference>
<dbReference type="Pfam" id="PF02569">
    <property type="entry name" value="Pantoate_ligase"/>
    <property type="match status" value="1"/>
</dbReference>
<dbReference type="SUPFAM" id="SSF52374">
    <property type="entry name" value="Nucleotidylyl transferase"/>
    <property type="match status" value="1"/>
</dbReference>
<keyword id="KW-0067">ATP-binding</keyword>
<keyword id="KW-0963">Cytoplasm</keyword>
<keyword id="KW-0436">Ligase</keyword>
<keyword id="KW-0547">Nucleotide-binding</keyword>
<keyword id="KW-0566">Pantothenate biosynthesis</keyword>
<keyword id="KW-1185">Reference proteome</keyword>
<evidence type="ECO:0000255" key="1">
    <source>
        <dbReference type="HAMAP-Rule" id="MF_00158"/>
    </source>
</evidence>
<comment type="function">
    <text evidence="1">Catalyzes the condensation of pantoate with beta-alanine in an ATP-dependent reaction via a pantoyl-adenylate intermediate.</text>
</comment>
<comment type="catalytic activity">
    <reaction evidence="1">
        <text>(R)-pantoate + beta-alanine + ATP = (R)-pantothenate + AMP + diphosphate + H(+)</text>
        <dbReference type="Rhea" id="RHEA:10912"/>
        <dbReference type="ChEBI" id="CHEBI:15378"/>
        <dbReference type="ChEBI" id="CHEBI:15980"/>
        <dbReference type="ChEBI" id="CHEBI:29032"/>
        <dbReference type="ChEBI" id="CHEBI:30616"/>
        <dbReference type="ChEBI" id="CHEBI:33019"/>
        <dbReference type="ChEBI" id="CHEBI:57966"/>
        <dbReference type="ChEBI" id="CHEBI:456215"/>
        <dbReference type="EC" id="6.3.2.1"/>
    </reaction>
</comment>
<comment type="pathway">
    <text evidence="1">Cofactor biosynthesis; (R)-pantothenate biosynthesis; (R)-pantothenate from (R)-pantoate and beta-alanine: step 1/1.</text>
</comment>
<comment type="subunit">
    <text evidence="1">Homodimer.</text>
</comment>
<comment type="subcellular location">
    <subcellularLocation>
        <location evidence="1">Cytoplasm</location>
    </subcellularLocation>
</comment>
<comment type="miscellaneous">
    <text evidence="1">The reaction proceeds by a bi uni uni bi ping pong mechanism.</text>
</comment>
<comment type="similarity">
    <text evidence="1">Belongs to the pantothenate synthetase family.</text>
</comment>
<name>PANC_PARP8</name>
<proteinExistence type="inferred from homology"/>
<feature type="chain" id="PRO_1000097041" description="Pantothenate synthetase">
    <location>
        <begin position="1"/>
        <end position="277"/>
    </location>
</feature>
<feature type="active site" description="Proton donor" evidence="1">
    <location>
        <position position="33"/>
    </location>
</feature>
<feature type="binding site" evidence="1">
    <location>
        <begin position="26"/>
        <end position="33"/>
    </location>
    <ligand>
        <name>ATP</name>
        <dbReference type="ChEBI" id="CHEBI:30616"/>
    </ligand>
</feature>
<feature type="binding site" evidence="1">
    <location>
        <position position="57"/>
    </location>
    <ligand>
        <name>(R)-pantoate</name>
        <dbReference type="ChEBI" id="CHEBI:15980"/>
    </ligand>
</feature>
<feature type="binding site" evidence="1">
    <location>
        <position position="57"/>
    </location>
    <ligand>
        <name>beta-alanine</name>
        <dbReference type="ChEBI" id="CHEBI:57966"/>
    </ligand>
</feature>
<feature type="binding site" evidence="1">
    <location>
        <begin position="144"/>
        <end position="147"/>
    </location>
    <ligand>
        <name>ATP</name>
        <dbReference type="ChEBI" id="CHEBI:30616"/>
    </ligand>
</feature>
<feature type="binding site" evidence="1">
    <location>
        <position position="150"/>
    </location>
    <ligand>
        <name>(R)-pantoate</name>
        <dbReference type="ChEBI" id="CHEBI:15980"/>
    </ligand>
</feature>
<feature type="binding site" evidence="1">
    <location>
        <position position="173"/>
    </location>
    <ligand>
        <name>ATP</name>
        <dbReference type="ChEBI" id="CHEBI:30616"/>
    </ligand>
</feature>
<feature type="binding site" evidence="1">
    <location>
        <begin position="181"/>
        <end position="184"/>
    </location>
    <ligand>
        <name>ATP</name>
        <dbReference type="ChEBI" id="CHEBI:30616"/>
    </ligand>
</feature>
<protein>
    <recommendedName>
        <fullName evidence="1">Pantothenate synthetase</fullName>
        <shortName evidence="1">PS</shortName>
        <ecNumber evidence="1">6.3.2.1</ecNumber>
    </recommendedName>
    <alternativeName>
        <fullName evidence="1">Pantoate--beta-alanine ligase</fullName>
    </alternativeName>
    <alternativeName>
        <fullName evidence="1">Pantoate-activating enzyme</fullName>
    </alternativeName>
</protein>
<accession>B2JEQ7</accession>